<dbReference type="EC" id="4.1.99.12" evidence="1"/>
<dbReference type="EMBL" id="CP000753">
    <property type="protein sequence ID" value="ABS06305.1"/>
    <property type="molecule type" value="Genomic_DNA"/>
</dbReference>
<dbReference type="RefSeq" id="WP_011848186.1">
    <property type="nucleotide sequence ID" value="NC_009665.1"/>
</dbReference>
<dbReference type="SMR" id="A6WHL6"/>
<dbReference type="KEGG" id="sbm:Shew185_0134"/>
<dbReference type="HOGENOM" id="CLU_020273_3_0_6"/>
<dbReference type="UniPathway" id="UPA00275">
    <property type="reaction ID" value="UER00399"/>
</dbReference>
<dbReference type="GO" id="GO:0005829">
    <property type="term" value="C:cytosol"/>
    <property type="evidence" value="ECO:0007669"/>
    <property type="project" value="TreeGrafter"/>
</dbReference>
<dbReference type="GO" id="GO:0008686">
    <property type="term" value="F:3,4-dihydroxy-2-butanone-4-phosphate synthase activity"/>
    <property type="evidence" value="ECO:0007669"/>
    <property type="project" value="UniProtKB-UniRule"/>
</dbReference>
<dbReference type="GO" id="GO:0000287">
    <property type="term" value="F:magnesium ion binding"/>
    <property type="evidence" value="ECO:0007669"/>
    <property type="project" value="UniProtKB-UniRule"/>
</dbReference>
<dbReference type="GO" id="GO:0030145">
    <property type="term" value="F:manganese ion binding"/>
    <property type="evidence" value="ECO:0007669"/>
    <property type="project" value="UniProtKB-UniRule"/>
</dbReference>
<dbReference type="GO" id="GO:0009231">
    <property type="term" value="P:riboflavin biosynthetic process"/>
    <property type="evidence" value="ECO:0007669"/>
    <property type="project" value="UniProtKB-UniRule"/>
</dbReference>
<dbReference type="FunFam" id="3.90.870.10:FF:000002">
    <property type="entry name" value="3,4-dihydroxy-2-butanone 4-phosphate synthase"/>
    <property type="match status" value="1"/>
</dbReference>
<dbReference type="Gene3D" id="3.90.870.10">
    <property type="entry name" value="DHBP synthase"/>
    <property type="match status" value="1"/>
</dbReference>
<dbReference type="HAMAP" id="MF_00180">
    <property type="entry name" value="RibB"/>
    <property type="match status" value="1"/>
</dbReference>
<dbReference type="InterPro" id="IPR017945">
    <property type="entry name" value="DHBP_synth_RibB-like_a/b_dom"/>
</dbReference>
<dbReference type="InterPro" id="IPR000422">
    <property type="entry name" value="DHBP_synthase_RibB"/>
</dbReference>
<dbReference type="NCBIfam" id="TIGR00506">
    <property type="entry name" value="ribB"/>
    <property type="match status" value="1"/>
</dbReference>
<dbReference type="PANTHER" id="PTHR21327:SF38">
    <property type="entry name" value="3,4-DIHYDROXY-2-BUTANONE 4-PHOSPHATE SYNTHASE"/>
    <property type="match status" value="1"/>
</dbReference>
<dbReference type="PANTHER" id="PTHR21327">
    <property type="entry name" value="GTP CYCLOHYDROLASE II-RELATED"/>
    <property type="match status" value="1"/>
</dbReference>
<dbReference type="Pfam" id="PF00926">
    <property type="entry name" value="DHBP_synthase"/>
    <property type="match status" value="1"/>
</dbReference>
<dbReference type="SUPFAM" id="SSF55821">
    <property type="entry name" value="YrdC/RibB"/>
    <property type="match status" value="1"/>
</dbReference>
<comment type="function">
    <text evidence="1">Catalyzes the conversion of D-ribulose 5-phosphate to formate and 3,4-dihydroxy-2-butanone 4-phosphate.</text>
</comment>
<comment type="catalytic activity">
    <reaction evidence="1">
        <text>D-ribulose 5-phosphate = (2S)-2-hydroxy-3-oxobutyl phosphate + formate + H(+)</text>
        <dbReference type="Rhea" id="RHEA:18457"/>
        <dbReference type="ChEBI" id="CHEBI:15378"/>
        <dbReference type="ChEBI" id="CHEBI:15740"/>
        <dbReference type="ChEBI" id="CHEBI:58121"/>
        <dbReference type="ChEBI" id="CHEBI:58830"/>
        <dbReference type="EC" id="4.1.99.12"/>
    </reaction>
</comment>
<comment type="cofactor">
    <cofactor evidence="1">
        <name>Mg(2+)</name>
        <dbReference type="ChEBI" id="CHEBI:18420"/>
    </cofactor>
    <cofactor evidence="1">
        <name>Mn(2+)</name>
        <dbReference type="ChEBI" id="CHEBI:29035"/>
    </cofactor>
    <text evidence="1">Binds 2 divalent metal cations per subunit. Magnesium or manganese.</text>
</comment>
<comment type="pathway">
    <text evidence="1">Cofactor biosynthesis; riboflavin biosynthesis; 2-hydroxy-3-oxobutyl phosphate from D-ribulose 5-phosphate: step 1/1.</text>
</comment>
<comment type="subunit">
    <text evidence="1">Homodimer.</text>
</comment>
<comment type="similarity">
    <text evidence="1">Belongs to the DHBP synthase family.</text>
</comment>
<sequence length="217" mass="22956">MNQSLLAPFGTAIERVEAGLNALRQGQGVLVVDDEDRENEGDLIFAAETLTNAQMAMLIRECSGIVCLCLPDEKIKALELPAMVEHNSSQYGTAFTVSIEATVGVTTGVSAADRVTTIKAAIADNAKPSDLARPGHVYPLRAQPGGVLTRRGHTEGTIDLVQLAGLKPAGVLCEVTNPDGTMARLPEIIAFGALHNMPVLTIEDIVVYRKSLLAKVG</sequence>
<name>RIBB_SHEB8</name>
<organism>
    <name type="scientific">Shewanella baltica (strain OS185)</name>
    <dbReference type="NCBI Taxonomy" id="402882"/>
    <lineage>
        <taxon>Bacteria</taxon>
        <taxon>Pseudomonadati</taxon>
        <taxon>Pseudomonadota</taxon>
        <taxon>Gammaproteobacteria</taxon>
        <taxon>Alteromonadales</taxon>
        <taxon>Shewanellaceae</taxon>
        <taxon>Shewanella</taxon>
    </lineage>
</organism>
<proteinExistence type="inferred from homology"/>
<protein>
    <recommendedName>
        <fullName evidence="1">3,4-dihydroxy-2-butanone 4-phosphate synthase</fullName>
        <shortName evidence="1">DHBP synthase</shortName>
        <ecNumber evidence="1">4.1.99.12</ecNumber>
    </recommendedName>
</protein>
<evidence type="ECO:0000255" key="1">
    <source>
        <dbReference type="HAMAP-Rule" id="MF_00180"/>
    </source>
</evidence>
<feature type="chain" id="PRO_1000040626" description="3,4-dihydroxy-2-butanone 4-phosphate synthase">
    <location>
        <begin position="1"/>
        <end position="217"/>
    </location>
</feature>
<feature type="binding site" evidence="1">
    <location>
        <begin position="37"/>
        <end position="38"/>
    </location>
    <ligand>
        <name>D-ribulose 5-phosphate</name>
        <dbReference type="ChEBI" id="CHEBI:58121"/>
    </ligand>
</feature>
<feature type="binding site" evidence="1">
    <location>
        <position position="38"/>
    </location>
    <ligand>
        <name>Mg(2+)</name>
        <dbReference type="ChEBI" id="CHEBI:18420"/>
        <label>1</label>
    </ligand>
</feature>
<feature type="binding site" evidence="1">
    <location>
        <position position="38"/>
    </location>
    <ligand>
        <name>Mg(2+)</name>
        <dbReference type="ChEBI" id="CHEBI:18420"/>
        <label>2</label>
    </ligand>
</feature>
<feature type="binding site" evidence="1">
    <location>
        <position position="42"/>
    </location>
    <ligand>
        <name>D-ribulose 5-phosphate</name>
        <dbReference type="ChEBI" id="CHEBI:58121"/>
    </ligand>
</feature>
<feature type="binding site" evidence="1">
    <location>
        <begin position="150"/>
        <end position="154"/>
    </location>
    <ligand>
        <name>D-ribulose 5-phosphate</name>
        <dbReference type="ChEBI" id="CHEBI:58121"/>
    </ligand>
</feature>
<feature type="binding site" evidence="1">
    <location>
        <position position="153"/>
    </location>
    <ligand>
        <name>Mg(2+)</name>
        <dbReference type="ChEBI" id="CHEBI:18420"/>
        <label>2</label>
    </ligand>
</feature>
<feature type="binding site" evidence="1">
    <location>
        <position position="174"/>
    </location>
    <ligand>
        <name>D-ribulose 5-phosphate</name>
        <dbReference type="ChEBI" id="CHEBI:58121"/>
    </ligand>
</feature>
<feature type="site" description="Essential for catalytic activity" evidence="1">
    <location>
        <position position="136"/>
    </location>
</feature>
<feature type="site" description="Essential for catalytic activity" evidence="1">
    <location>
        <position position="174"/>
    </location>
</feature>
<reference key="1">
    <citation type="submission" date="2007-07" db="EMBL/GenBank/DDBJ databases">
        <title>Complete sequence of chromosome of Shewanella baltica OS185.</title>
        <authorList>
            <consortium name="US DOE Joint Genome Institute"/>
            <person name="Copeland A."/>
            <person name="Lucas S."/>
            <person name="Lapidus A."/>
            <person name="Barry K."/>
            <person name="Glavina del Rio T."/>
            <person name="Dalin E."/>
            <person name="Tice H."/>
            <person name="Pitluck S."/>
            <person name="Sims D."/>
            <person name="Brettin T."/>
            <person name="Bruce D."/>
            <person name="Detter J.C."/>
            <person name="Han C."/>
            <person name="Schmutz J."/>
            <person name="Larimer F."/>
            <person name="Land M."/>
            <person name="Hauser L."/>
            <person name="Kyrpides N."/>
            <person name="Mikhailova N."/>
            <person name="Brettar I."/>
            <person name="Rodrigues J."/>
            <person name="Konstantinidis K."/>
            <person name="Tiedje J."/>
            <person name="Richardson P."/>
        </authorList>
    </citation>
    <scope>NUCLEOTIDE SEQUENCE [LARGE SCALE GENOMIC DNA]</scope>
    <source>
        <strain>OS185</strain>
    </source>
</reference>
<gene>
    <name evidence="1" type="primary">ribB</name>
    <name type="ordered locus">Shew185_0134</name>
</gene>
<keyword id="KW-0456">Lyase</keyword>
<keyword id="KW-0460">Magnesium</keyword>
<keyword id="KW-0464">Manganese</keyword>
<keyword id="KW-0479">Metal-binding</keyword>
<keyword id="KW-0686">Riboflavin biosynthesis</keyword>
<accession>A6WHL6</accession>